<comment type="function">
    <text evidence="1">Inhibits post-transcriptional processing of cellular pre-mRNA, by binding and inhibiting two cellular proteins that are required for the 3'-end processing of cellular pre-mRNAs: the 30 kDa cleavage and polyadenylation specificity factor/CPSF4 and the poly(A)-binding protein 2/PABPN1. In turn, unprocessed 3' end pre-mRNAs accumulate in the host nucleus and are no longer exported to the cytoplasm. Cellular protein synthesis is thereby shut off very early after virus infection. Viral protein synthesis is not affected by the inhibition of the cellular 3' end processing machinery because the poly(A) tails of viral mRNAs are produced by the viral polymerase through a stuttering mechanism. Prevents the establishment of the cellular antiviral state by inhibiting TRIM25-mediated RIGI ubiquitination, which normally triggers the antiviral transduction signal that leads to the activation of type I IFN genes by transcription factors IRF3 and IRF7. Also binds poly(A) and U6 snRNA. Inhibits the integrated stress response (ISR) in the infected cell by blocking dsRNA binding by EIF2AK2/PKR and further phosphorylation of EIF2S1/EIF-2ALPHA. Stress granule formation is thus inhibited, which allows protein synthesis and viral replication.</text>
</comment>
<comment type="subunit">
    <text evidence="1">Homodimer. Interacts with host TRIM25 (via coiled coil); this interaction specifically inhibits TRIM25 multimerization and TRIM25-mediated RIGI CARD ubiquitination. Interacts with human EIF2AK2/PKR, CPSF4, IVNS1ABP and PABPN1.</text>
</comment>
<comment type="subcellular location">
    <subcellularLocation>
        <location evidence="1">Host nucleus</location>
    </subcellularLocation>
    <subcellularLocation>
        <location evidence="1">Host cytoplasm</location>
    </subcellularLocation>
    <text evidence="1">In uninfected, transfected cells, NS1 is localized in the nucleus. Only in virus infected cells, the nuclear export signal is unveiled, presumably by a viral protein, and a fraction of NS1 is exported in the cytoplasm.</text>
</comment>
<comment type="alternative products">
    <event type="alternative splicing"/>
    <isoform>
        <id>O92548-1</id>
        <name>NS1</name>
        <sequence type="displayed"/>
    </isoform>
    <isoform>
        <id>O92548-2</id>
        <name>NEP</name>
        <name>NS2</name>
        <sequence type="not described"/>
    </isoform>
</comment>
<comment type="domain">
    <text evidence="1">The dsRNA-binding region is required for suppression of RNA silencing.</text>
</comment>
<comment type="PTM">
    <text evidence="1">Upon interferon induction, ISGylated via host HERC5; this results in the impairment of NS1 interaction with RNA targets due to its inability to form homodimers and to interact with host EIF2AK2/PKR.</text>
</comment>
<comment type="similarity">
    <text evidence="1">Belongs to the influenza A viruses NS1 family.</text>
</comment>
<dbReference type="EMBL" id="M80942">
    <property type="protein sequence ID" value="AAC35564.1"/>
    <property type="molecule type" value="Genomic_RNA"/>
</dbReference>
<dbReference type="SMR" id="O92548"/>
<dbReference type="GO" id="GO:0030430">
    <property type="term" value="C:host cell cytoplasm"/>
    <property type="evidence" value="ECO:0007669"/>
    <property type="project" value="UniProtKB-SubCell"/>
</dbReference>
<dbReference type="GO" id="GO:0042025">
    <property type="term" value="C:host cell nucleus"/>
    <property type="evidence" value="ECO:0007669"/>
    <property type="project" value="UniProtKB-SubCell"/>
</dbReference>
<dbReference type="GO" id="GO:0030291">
    <property type="term" value="F:protein serine/threonine kinase inhibitor activity"/>
    <property type="evidence" value="ECO:0007669"/>
    <property type="project" value="UniProtKB-KW"/>
</dbReference>
<dbReference type="GO" id="GO:0003723">
    <property type="term" value="F:RNA binding"/>
    <property type="evidence" value="ECO:0007669"/>
    <property type="project" value="UniProtKB-KW"/>
</dbReference>
<dbReference type="GO" id="GO:0039540">
    <property type="term" value="P:symbiont-mediated suppression of host cytoplasmic pattern recognition receptor signaling pathway via inhibition of RIG-I activity"/>
    <property type="evidence" value="ECO:0007669"/>
    <property type="project" value="UniProtKB-KW"/>
</dbReference>
<dbReference type="GO" id="GO:0039657">
    <property type="term" value="P:symbiont-mediated suppression of host gene expression"/>
    <property type="evidence" value="ECO:0007669"/>
    <property type="project" value="UniProtKB-KW"/>
</dbReference>
<dbReference type="GO" id="GO:0039524">
    <property type="term" value="P:symbiont-mediated suppression of host mRNA processing"/>
    <property type="evidence" value="ECO:0007669"/>
    <property type="project" value="UniProtKB-KW"/>
</dbReference>
<dbReference type="GO" id="GO:0039580">
    <property type="term" value="P:symbiont-mediated suppression of host PKR/eIFalpha signaling"/>
    <property type="evidence" value="ECO:0007669"/>
    <property type="project" value="UniProtKB-KW"/>
</dbReference>
<dbReference type="GO" id="GO:0039502">
    <property type="term" value="P:symbiont-mediated suppression of host type I interferon-mediated signaling pathway"/>
    <property type="evidence" value="ECO:0007669"/>
    <property type="project" value="UniProtKB-KW"/>
</dbReference>
<dbReference type="FunFam" id="1.10.287.10:FF:000001">
    <property type="entry name" value="Non-structural protein 1"/>
    <property type="match status" value="1"/>
</dbReference>
<dbReference type="FunFam" id="3.30.420.330:FF:000001">
    <property type="entry name" value="Non-structural protein 1"/>
    <property type="match status" value="1"/>
</dbReference>
<dbReference type="Gene3D" id="3.30.420.330">
    <property type="entry name" value="Influenza virus non-structural protein, effector domain"/>
    <property type="match status" value="1"/>
</dbReference>
<dbReference type="Gene3D" id="1.10.287.10">
    <property type="entry name" value="S15/NS1, RNA-binding"/>
    <property type="match status" value="1"/>
</dbReference>
<dbReference type="HAMAP" id="MF_04066">
    <property type="entry name" value="INFV_NS1"/>
    <property type="match status" value="1"/>
</dbReference>
<dbReference type="InterPro" id="IPR004208">
    <property type="entry name" value="NS1"/>
</dbReference>
<dbReference type="InterPro" id="IPR000256">
    <property type="entry name" value="NS1A"/>
</dbReference>
<dbReference type="InterPro" id="IPR038064">
    <property type="entry name" value="NS1A_effect_dom-like_sf"/>
</dbReference>
<dbReference type="InterPro" id="IPR009068">
    <property type="entry name" value="uS15_NS1_RNA-bd_sf"/>
</dbReference>
<dbReference type="Pfam" id="PF00600">
    <property type="entry name" value="Flu_NS1"/>
    <property type="match status" value="1"/>
</dbReference>
<dbReference type="SUPFAM" id="SSF143021">
    <property type="entry name" value="Ns1 effector domain-like"/>
    <property type="match status" value="1"/>
</dbReference>
<dbReference type="SUPFAM" id="SSF47060">
    <property type="entry name" value="S15/NS1 RNA-binding domain"/>
    <property type="match status" value="1"/>
</dbReference>
<sequence>MDSNTVSSFQVDCFLWNVRKRFADQELGDAPFLDRLRRDQKSLRGRGSTLGLDIETATRVGKQIVERILEEESDEALKMNIASVPASRYLTDMTLEEMSRDWFMLMPKQKVAGSLCIRMDQAIMDKTITLKANFSVIFERLETLILLRAFTEEGSIVGEISPLPSLSGHTNEDVKNAIGILIGGLEWNDNTVRVSETLQRFAWRSSNEDGRPPLPPKQK</sequence>
<organism>
    <name type="scientific">Influenza A virus (strain A/Budgerigar/Hokkaido/1/1977 H4N6)</name>
    <dbReference type="NCBI Taxonomy" id="385587"/>
    <lineage>
        <taxon>Viruses</taxon>
        <taxon>Riboviria</taxon>
        <taxon>Orthornavirae</taxon>
        <taxon>Negarnaviricota</taxon>
        <taxon>Polyploviricotina</taxon>
        <taxon>Insthoviricetes</taxon>
        <taxon>Articulavirales</taxon>
        <taxon>Orthomyxoviridae</taxon>
        <taxon>Alphainfluenzavirus</taxon>
        <taxon>Alphainfluenzavirus influenzae</taxon>
        <taxon>Influenza A virus</taxon>
    </lineage>
</organism>
<evidence type="ECO:0000255" key="1">
    <source>
        <dbReference type="HAMAP-Rule" id="MF_04066"/>
    </source>
</evidence>
<keyword id="KW-0025">Alternative splicing</keyword>
<keyword id="KW-1262">Eukaryotic host gene expression shutoff by virus</keyword>
<keyword id="KW-1035">Host cytoplasm</keyword>
<keyword id="KW-1190">Host gene expression shutoff by virus</keyword>
<keyword id="KW-1192">Host mRNA suppression by virus</keyword>
<keyword id="KW-1048">Host nucleus</keyword>
<keyword id="KW-0945">Host-virus interaction</keyword>
<keyword id="KW-1090">Inhibition of host innate immune response by virus</keyword>
<keyword id="KW-1114">Inhibition of host interferon signaling pathway by virus</keyword>
<keyword id="KW-1102">Inhibition of host PKR by virus</keyword>
<keyword id="KW-1103">Inhibition of host pre-mRNA processing by virus</keyword>
<keyword id="KW-1088">Inhibition of host RIG-I by virus</keyword>
<keyword id="KW-1113">Inhibition of host RLR pathway by virus</keyword>
<keyword id="KW-0922">Interferon antiviral system evasion</keyword>
<keyword id="KW-0694">RNA-binding</keyword>
<keyword id="KW-0832">Ubl conjugation</keyword>
<keyword id="KW-0899">Viral immunoevasion</keyword>
<protein>
    <recommendedName>
        <fullName evidence="1">Non-structural protein 1</fullName>
        <shortName evidence="1">NS1</shortName>
    </recommendedName>
    <alternativeName>
        <fullName evidence="1">NS1A</fullName>
    </alternativeName>
</protein>
<proteinExistence type="inferred from homology"/>
<organismHost>
    <name type="scientific">Aves</name>
    <dbReference type="NCBI Taxonomy" id="8782"/>
</organismHost>
<organismHost>
    <name type="scientific">Sus scrofa</name>
    <name type="common">Pig</name>
    <dbReference type="NCBI Taxonomy" id="9823"/>
</organismHost>
<accession>O92548</accession>
<name>NS1_I77AG</name>
<feature type="chain" id="PRO_0000324260" description="Non-structural protein 1">
    <location>
        <begin position="1"/>
        <end position="219"/>
    </location>
</feature>
<feature type="region of interest" description="RNA-binding and homodimerization" evidence="1">
    <location>
        <begin position="1"/>
        <end position="73"/>
    </location>
</feature>
<feature type="region of interest" description="CPSF4-binding" evidence="1">
    <location>
        <begin position="180"/>
        <end position="215"/>
    </location>
</feature>
<feature type="short sequence motif" description="Nuclear localization signal" evidence="1">
    <location>
        <begin position="34"/>
        <end position="38"/>
    </location>
</feature>
<feature type="short sequence motif" description="Nuclear export signal" evidence="1">
    <location>
        <begin position="137"/>
        <end position="146"/>
    </location>
</feature>
<gene>
    <name evidence="1" type="primary">NS</name>
</gene>
<reference key="1">
    <citation type="journal article" date="1998" name="Virus Res.">
        <title>Influence of host species on the evolution of the nonstructural (NS) gene of influenza A viruses.</title>
        <authorList>
            <person name="Kawaoka Y."/>
            <person name="Gorman O.T."/>
            <person name="Ito T."/>
            <person name="Wells K."/>
            <person name="Donis R.O."/>
            <person name="Castrucci M.R."/>
            <person name="Donatelli I."/>
            <person name="Webster R.G."/>
        </authorList>
    </citation>
    <scope>NUCLEOTIDE SEQUENCE [GENOMIC RNA]</scope>
</reference>